<organism>
    <name type="scientific">Acidovorax sp. (strain JS42)</name>
    <dbReference type="NCBI Taxonomy" id="232721"/>
    <lineage>
        <taxon>Bacteria</taxon>
        <taxon>Pseudomonadati</taxon>
        <taxon>Pseudomonadota</taxon>
        <taxon>Betaproteobacteria</taxon>
        <taxon>Burkholderiales</taxon>
        <taxon>Comamonadaceae</taxon>
        <taxon>Acidovorax</taxon>
    </lineage>
</organism>
<feature type="chain" id="PRO_1000022455" description="Chorismate synthase">
    <location>
        <begin position="1"/>
        <end position="366"/>
    </location>
</feature>
<feature type="binding site" evidence="1">
    <location>
        <position position="48"/>
    </location>
    <ligand>
        <name>NADP(+)</name>
        <dbReference type="ChEBI" id="CHEBI:58349"/>
    </ligand>
</feature>
<feature type="binding site" evidence="1">
    <location>
        <position position="54"/>
    </location>
    <ligand>
        <name>NADP(+)</name>
        <dbReference type="ChEBI" id="CHEBI:58349"/>
    </ligand>
</feature>
<feature type="binding site" evidence="1">
    <location>
        <begin position="125"/>
        <end position="127"/>
    </location>
    <ligand>
        <name>FMN</name>
        <dbReference type="ChEBI" id="CHEBI:58210"/>
    </ligand>
</feature>
<feature type="binding site" evidence="1">
    <location>
        <begin position="237"/>
        <end position="238"/>
    </location>
    <ligand>
        <name>FMN</name>
        <dbReference type="ChEBI" id="CHEBI:58210"/>
    </ligand>
</feature>
<feature type="binding site" evidence="1">
    <location>
        <position position="277"/>
    </location>
    <ligand>
        <name>FMN</name>
        <dbReference type="ChEBI" id="CHEBI:58210"/>
    </ligand>
</feature>
<feature type="binding site" evidence="1">
    <location>
        <begin position="292"/>
        <end position="296"/>
    </location>
    <ligand>
        <name>FMN</name>
        <dbReference type="ChEBI" id="CHEBI:58210"/>
    </ligand>
</feature>
<feature type="binding site" evidence="1">
    <location>
        <position position="318"/>
    </location>
    <ligand>
        <name>FMN</name>
        <dbReference type="ChEBI" id="CHEBI:58210"/>
    </ligand>
</feature>
<accession>A1W6H4</accession>
<evidence type="ECO:0000255" key="1">
    <source>
        <dbReference type="HAMAP-Rule" id="MF_00300"/>
    </source>
</evidence>
<proteinExistence type="inferred from homology"/>
<gene>
    <name evidence="1" type="primary">aroC</name>
    <name type="ordered locus">Ajs_1658</name>
</gene>
<reference key="1">
    <citation type="submission" date="2006-12" db="EMBL/GenBank/DDBJ databases">
        <title>Complete sequence of chromosome 1 of Acidovorax sp. JS42.</title>
        <authorList>
            <person name="Copeland A."/>
            <person name="Lucas S."/>
            <person name="Lapidus A."/>
            <person name="Barry K."/>
            <person name="Detter J.C."/>
            <person name="Glavina del Rio T."/>
            <person name="Dalin E."/>
            <person name="Tice H."/>
            <person name="Pitluck S."/>
            <person name="Chertkov O."/>
            <person name="Brettin T."/>
            <person name="Bruce D."/>
            <person name="Han C."/>
            <person name="Tapia R."/>
            <person name="Gilna P."/>
            <person name="Schmutz J."/>
            <person name="Larimer F."/>
            <person name="Land M."/>
            <person name="Hauser L."/>
            <person name="Kyrpides N."/>
            <person name="Kim E."/>
            <person name="Stahl D."/>
            <person name="Richardson P."/>
        </authorList>
    </citation>
    <scope>NUCLEOTIDE SEQUENCE [LARGE SCALE GENOMIC DNA]</scope>
    <source>
        <strain>JS42</strain>
    </source>
</reference>
<protein>
    <recommendedName>
        <fullName evidence="1">Chorismate synthase</fullName>
        <shortName evidence="1">CS</shortName>
        <ecNumber evidence="1">4.2.3.5</ecNumber>
    </recommendedName>
    <alternativeName>
        <fullName evidence="1">5-enolpyruvylshikimate-3-phosphate phospholyase</fullName>
    </alternativeName>
</protein>
<keyword id="KW-0028">Amino-acid biosynthesis</keyword>
<keyword id="KW-0057">Aromatic amino acid biosynthesis</keyword>
<keyword id="KW-0274">FAD</keyword>
<keyword id="KW-0285">Flavoprotein</keyword>
<keyword id="KW-0288">FMN</keyword>
<keyword id="KW-0456">Lyase</keyword>
<keyword id="KW-0521">NADP</keyword>
<name>AROC_ACISJ</name>
<sequence>MSGNTLGTLFCVTNFGESHGPAIGCVIDGCPPGMELSEADIQADLDRRRPGTSRHVTQRNEPDAVEILSGVYEGKTTGTPIALLIRNTDQRSKDYGNIAQSFRPGHADYAYWHKYGLRDPRGGGRSSARLTAPTVAAGAVAKKWLAEKYGTRFRACMTQLGELPIPFESWEHVPHNPFFAPVADVQAYEDYMDALRKSGDSCGARIRVQATGVPVGLGDPLYDKLDADIAHVMMGLNAVKGVEIGAGFASVAQRGTTHGDSLTPTGFASNNAGGVLGGISTGQDIEVSLAIKPTSSIISPRESIDIHGQSTEVITKGRHDPCVGIRAAPIAEALLALVIMDHALRHRAQCGDVVQAVAPIPAVRLG</sequence>
<dbReference type="EC" id="4.2.3.5" evidence="1"/>
<dbReference type="EMBL" id="CP000539">
    <property type="protein sequence ID" value="ABM41849.1"/>
    <property type="molecule type" value="Genomic_DNA"/>
</dbReference>
<dbReference type="SMR" id="A1W6H4"/>
<dbReference type="STRING" id="232721.Ajs_1658"/>
<dbReference type="KEGG" id="ajs:Ajs_1658"/>
<dbReference type="eggNOG" id="COG0082">
    <property type="taxonomic scope" value="Bacteria"/>
</dbReference>
<dbReference type="HOGENOM" id="CLU_034547_0_2_4"/>
<dbReference type="UniPathway" id="UPA00053">
    <property type="reaction ID" value="UER00090"/>
</dbReference>
<dbReference type="Proteomes" id="UP000000645">
    <property type="component" value="Chromosome"/>
</dbReference>
<dbReference type="GO" id="GO:0005829">
    <property type="term" value="C:cytosol"/>
    <property type="evidence" value="ECO:0007669"/>
    <property type="project" value="TreeGrafter"/>
</dbReference>
<dbReference type="GO" id="GO:0004107">
    <property type="term" value="F:chorismate synthase activity"/>
    <property type="evidence" value="ECO:0007669"/>
    <property type="project" value="UniProtKB-UniRule"/>
</dbReference>
<dbReference type="GO" id="GO:0010181">
    <property type="term" value="F:FMN binding"/>
    <property type="evidence" value="ECO:0007669"/>
    <property type="project" value="TreeGrafter"/>
</dbReference>
<dbReference type="GO" id="GO:0008652">
    <property type="term" value="P:amino acid biosynthetic process"/>
    <property type="evidence" value="ECO:0007669"/>
    <property type="project" value="UniProtKB-KW"/>
</dbReference>
<dbReference type="GO" id="GO:0009073">
    <property type="term" value="P:aromatic amino acid family biosynthetic process"/>
    <property type="evidence" value="ECO:0007669"/>
    <property type="project" value="UniProtKB-KW"/>
</dbReference>
<dbReference type="GO" id="GO:0009423">
    <property type="term" value="P:chorismate biosynthetic process"/>
    <property type="evidence" value="ECO:0007669"/>
    <property type="project" value="UniProtKB-UniRule"/>
</dbReference>
<dbReference type="CDD" id="cd07304">
    <property type="entry name" value="Chorismate_synthase"/>
    <property type="match status" value="1"/>
</dbReference>
<dbReference type="Gene3D" id="3.60.150.10">
    <property type="entry name" value="Chorismate synthase AroC"/>
    <property type="match status" value="1"/>
</dbReference>
<dbReference type="HAMAP" id="MF_00300">
    <property type="entry name" value="Chorismate_synth"/>
    <property type="match status" value="1"/>
</dbReference>
<dbReference type="InterPro" id="IPR000453">
    <property type="entry name" value="Chorismate_synth"/>
</dbReference>
<dbReference type="InterPro" id="IPR035904">
    <property type="entry name" value="Chorismate_synth_AroC_sf"/>
</dbReference>
<dbReference type="InterPro" id="IPR020541">
    <property type="entry name" value="Chorismate_synthase_CS"/>
</dbReference>
<dbReference type="NCBIfam" id="TIGR00033">
    <property type="entry name" value="aroC"/>
    <property type="match status" value="1"/>
</dbReference>
<dbReference type="NCBIfam" id="NF003793">
    <property type="entry name" value="PRK05382.1"/>
    <property type="match status" value="1"/>
</dbReference>
<dbReference type="PANTHER" id="PTHR21085">
    <property type="entry name" value="CHORISMATE SYNTHASE"/>
    <property type="match status" value="1"/>
</dbReference>
<dbReference type="PANTHER" id="PTHR21085:SF0">
    <property type="entry name" value="CHORISMATE SYNTHASE"/>
    <property type="match status" value="1"/>
</dbReference>
<dbReference type="Pfam" id="PF01264">
    <property type="entry name" value="Chorismate_synt"/>
    <property type="match status" value="1"/>
</dbReference>
<dbReference type="PIRSF" id="PIRSF001456">
    <property type="entry name" value="Chorismate_synth"/>
    <property type="match status" value="1"/>
</dbReference>
<dbReference type="SUPFAM" id="SSF103263">
    <property type="entry name" value="Chorismate synthase, AroC"/>
    <property type="match status" value="1"/>
</dbReference>
<dbReference type="PROSITE" id="PS00787">
    <property type="entry name" value="CHORISMATE_SYNTHASE_1"/>
    <property type="match status" value="1"/>
</dbReference>
<dbReference type="PROSITE" id="PS00788">
    <property type="entry name" value="CHORISMATE_SYNTHASE_2"/>
    <property type="match status" value="1"/>
</dbReference>
<dbReference type="PROSITE" id="PS00789">
    <property type="entry name" value="CHORISMATE_SYNTHASE_3"/>
    <property type="match status" value="1"/>
</dbReference>
<comment type="function">
    <text evidence="1">Catalyzes the anti-1,4-elimination of the C-3 phosphate and the C-6 proR hydrogen from 5-enolpyruvylshikimate-3-phosphate (EPSP) to yield chorismate, which is the branch point compound that serves as the starting substrate for the three terminal pathways of aromatic amino acid biosynthesis. This reaction introduces a second double bond into the aromatic ring system.</text>
</comment>
<comment type="catalytic activity">
    <reaction evidence="1">
        <text>5-O-(1-carboxyvinyl)-3-phosphoshikimate = chorismate + phosphate</text>
        <dbReference type="Rhea" id="RHEA:21020"/>
        <dbReference type="ChEBI" id="CHEBI:29748"/>
        <dbReference type="ChEBI" id="CHEBI:43474"/>
        <dbReference type="ChEBI" id="CHEBI:57701"/>
        <dbReference type="EC" id="4.2.3.5"/>
    </reaction>
</comment>
<comment type="cofactor">
    <cofactor evidence="1">
        <name>FMNH2</name>
        <dbReference type="ChEBI" id="CHEBI:57618"/>
    </cofactor>
    <text evidence="1">Reduced FMN (FMNH(2)).</text>
</comment>
<comment type="pathway">
    <text evidence="1">Metabolic intermediate biosynthesis; chorismate biosynthesis; chorismate from D-erythrose 4-phosphate and phosphoenolpyruvate: step 7/7.</text>
</comment>
<comment type="subunit">
    <text evidence="1">Homotetramer.</text>
</comment>
<comment type="similarity">
    <text evidence="1">Belongs to the chorismate synthase family.</text>
</comment>